<protein>
    <recommendedName>
        <fullName>Serine protease HTR4</fullName>
        <ecNumber>3.4.21.-</ecNumber>
    </recommendedName>
    <alternativeName>
        <fullName>High-temperature requirement factor A4</fullName>
    </alternativeName>
</protein>
<reference key="1">
    <citation type="journal article" date="2004" name="Nature">
        <title>Genome sequence of the Brown Norway rat yields insights into mammalian evolution.</title>
        <authorList>
            <person name="Gibbs R.A."/>
            <person name="Weinstock G.M."/>
            <person name="Metzker M.L."/>
            <person name="Muzny D.M."/>
            <person name="Sodergren E.J."/>
            <person name="Scherer S."/>
            <person name="Scott G."/>
            <person name="Steffen D."/>
            <person name="Worley K.C."/>
            <person name="Burch P.E."/>
            <person name="Okwuonu G."/>
            <person name="Hines S."/>
            <person name="Lewis L."/>
            <person name="Deramo C."/>
            <person name="Delgado O."/>
            <person name="Dugan-Rocha S."/>
            <person name="Miner G."/>
            <person name="Morgan M."/>
            <person name="Hawes A."/>
            <person name="Gill R."/>
            <person name="Holt R.A."/>
            <person name="Adams M.D."/>
            <person name="Amanatides P.G."/>
            <person name="Baden-Tillson H."/>
            <person name="Barnstead M."/>
            <person name="Chin S."/>
            <person name="Evans C.A."/>
            <person name="Ferriera S."/>
            <person name="Fosler C."/>
            <person name="Glodek A."/>
            <person name="Gu Z."/>
            <person name="Jennings D."/>
            <person name="Kraft C.L."/>
            <person name="Nguyen T."/>
            <person name="Pfannkoch C.M."/>
            <person name="Sitter C."/>
            <person name="Sutton G.G."/>
            <person name="Venter J.C."/>
            <person name="Woodage T."/>
            <person name="Smith D."/>
            <person name="Lee H.-M."/>
            <person name="Gustafson E."/>
            <person name="Cahill P."/>
            <person name="Kana A."/>
            <person name="Doucette-Stamm L."/>
            <person name="Weinstock K."/>
            <person name="Fechtel K."/>
            <person name="Weiss R.B."/>
            <person name="Dunn D.M."/>
            <person name="Green E.D."/>
            <person name="Blakesley R.W."/>
            <person name="Bouffard G.G."/>
            <person name="De Jong P.J."/>
            <person name="Osoegawa K."/>
            <person name="Zhu B."/>
            <person name="Marra M."/>
            <person name="Schein J."/>
            <person name="Bosdet I."/>
            <person name="Fjell C."/>
            <person name="Jones S."/>
            <person name="Krzywinski M."/>
            <person name="Mathewson C."/>
            <person name="Siddiqui A."/>
            <person name="Wye N."/>
            <person name="McPherson J."/>
            <person name="Zhao S."/>
            <person name="Fraser C.M."/>
            <person name="Shetty J."/>
            <person name="Shatsman S."/>
            <person name="Geer K."/>
            <person name="Chen Y."/>
            <person name="Abramzon S."/>
            <person name="Nierman W.C."/>
            <person name="Havlak P.H."/>
            <person name="Chen R."/>
            <person name="Durbin K.J."/>
            <person name="Egan A."/>
            <person name="Ren Y."/>
            <person name="Song X.-Z."/>
            <person name="Li B."/>
            <person name="Liu Y."/>
            <person name="Qin X."/>
            <person name="Cawley S."/>
            <person name="Cooney A.J."/>
            <person name="D'Souza L.M."/>
            <person name="Martin K."/>
            <person name="Wu J.Q."/>
            <person name="Gonzalez-Garay M.L."/>
            <person name="Jackson A.R."/>
            <person name="Kalafus K.J."/>
            <person name="McLeod M.P."/>
            <person name="Milosavljevic A."/>
            <person name="Virk D."/>
            <person name="Volkov A."/>
            <person name="Wheeler D.A."/>
            <person name="Zhang Z."/>
            <person name="Bailey J.A."/>
            <person name="Eichler E.E."/>
            <person name="Tuzun E."/>
            <person name="Birney E."/>
            <person name="Mongin E."/>
            <person name="Ureta-Vidal A."/>
            <person name="Woodwark C."/>
            <person name="Zdobnov E."/>
            <person name="Bork P."/>
            <person name="Suyama M."/>
            <person name="Torrents D."/>
            <person name="Alexandersson M."/>
            <person name="Trask B.J."/>
            <person name="Young J.M."/>
            <person name="Huang H."/>
            <person name="Wang H."/>
            <person name="Xing H."/>
            <person name="Daniels S."/>
            <person name="Gietzen D."/>
            <person name="Schmidt J."/>
            <person name="Stevens K."/>
            <person name="Vitt U."/>
            <person name="Wingrove J."/>
            <person name="Camara F."/>
            <person name="Mar Alba M."/>
            <person name="Abril J.F."/>
            <person name="Guigo R."/>
            <person name="Smit A."/>
            <person name="Dubchak I."/>
            <person name="Rubin E.M."/>
            <person name="Couronne O."/>
            <person name="Poliakov A."/>
            <person name="Huebner N."/>
            <person name="Ganten D."/>
            <person name="Goesele C."/>
            <person name="Hummel O."/>
            <person name="Kreitler T."/>
            <person name="Lee Y.-A."/>
            <person name="Monti J."/>
            <person name="Schulz H."/>
            <person name="Zimdahl H."/>
            <person name="Himmelbauer H."/>
            <person name="Lehrach H."/>
            <person name="Jacob H.J."/>
            <person name="Bromberg S."/>
            <person name="Gullings-Handley J."/>
            <person name="Jensen-Seaman M.I."/>
            <person name="Kwitek A.E."/>
            <person name="Lazar J."/>
            <person name="Pasko D."/>
            <person name="Tonellato P.J."/>
            <person name="Twigger S."/>
            <person name="Ponting C.P."/>
            <person name="Duarte J.M."/>
            <person name="Rice S."/>
            <person name="Goodstadt L."/>
            <person name="Beatson S.A."/>
            <person name="Emes R.D."/>
            <person name="Winter E.E."/>
            <person name="Webber C."/>
            <person name="Brandt P."/>
            <person name="Nyakatura G."/>
            <person name="Adetobi M."/>
            <person name="Chiaromonte F."/>
            <person name="Elnitski L."/>
            <person name="Eswara P."/>
            <person name="Hardison R.C."/>
            <person name="Hou M."/>
            <person name="Kolbe D."/>
            <person name="Makova K."/>
            <person name="Miller W."/>
            <person name="Nekrutenko A."/>
            <person name="Riemer C."/>
            <person name="Schwartz S."/>
            <person name="Taylor J."/>
            <person name="Yang S."/>
            <person name="Zhang Y."/>
            <person name="Lindpaintner K."/>
            <person name="Andrews T.D."/>
            <person name="Caccamo M."/>
            <person name="Clamp M."/>
            <person name="Clarke L."/>
            <person name="Curwen V."/>
            <person name="Durbin R.M."/>
            <person name="Eyras E."/>
            <person name="Searle S.M."/>
            <person name="Cooper G.M."/>
            <person name="Batzoglou S."/>
            <person name="Brudno M."/>
            <person name="Sidow A."/>
            <person name="Stone E.A."/>
            <person name="Payseur B.A."/>
            <person name="Bourque G."/>
            <person name="Lopez-Otin C."/>
            <person name="Puente X.S."/>
            <person name="Chakrabarti K."/>
            <person name="Chatterji S."/>
            <person name="Dewey C."/>
            <person name="Pachter L."/>
            <person name="Bray N."/>
            <person name="Yap V.B."/>
            <person name="Caspi A."/>
            <person name="Tesler G."/>
            <person name="Pevzner P.A."/>
            <person name="Haussler D."/>
            <person name="Roskin K.M."/>
            <person name="Baertsch R."/>
            <person name="Clawson H."/>
            <person name="Furey T.S."/>
            <person name="Hinrichs A.S."/>
            <person name="Karolchik D."/>
            <person name="Kent W.J."/>
            <person name="Rosenbloom K.R."/>
            <person name="Trumbower H."/>
            <person name="Weirauch M."/>
            <person name="Cooper D.N."/>
            <person name="Stenson P.D."/>
            <person name="Ma B."/>
            <person name="Brent M."/>
            <person name="Arumugam M."/>
            <person name="Shteynberg D."/>
            <person name="Copley R.R."/>
            <person name="Taylor M.S."/>
            <person name="Riethman H."/>
            <person name="Mudunuri U."/>
            <person name="Peterson J."/>
            <person name="Guyer M."/>
            <person name="Felsenfeld A."/>
            <person name="Old S."/>
            <person name="Mockrin S."/>
            <person name="Collins F.S."/>
        </authorList>
    </citation>
    <scope>NUCLEOTIDE SEQUENCE [LARGE SCALE GENOMIC DNA]</scope>
    <source>
        <strain>Brown Norway</strain>
    </source>
</reference>
<evidence type="ECO:0000250" key="1"/>
<evidence type="ECO:0000255" key="2"/>
<evidence type="ECO:0000255" key="3">
    <source>
        <dbReference type="PROSITE-ProRule" id="PRU00143"/>
    </source>
</evidence>
<evidence type="ECO:0000255" key="4">
    <source>
        <dbReference type="PROSITE-ProRule" id="PRU00653"/>
    </source>
</evidence>
<evidence type="ECO:0000305" key="5"/>
<keyword id="KW-1015">Disulfide bond</keyword>
<keyword id="KW-0378">Hydrolase</keyword>
<keyword id="KW-0645">Protease</keyword>
<keyword id="KW-1185">Reference proteome</keyword>
<keyword id="KW-0964">Secreted</keyword>
<keyword id="KW-0720">Serine protease</keyword>
<keyword id="KW-0732">Signal</keyword>
<proteinExistence type="inferred from homology"/>
<gene>
    <name type="primary">Htra4</name>
</gene>
<dbReference type="EC" id="3.4.21.-"/>
<dbReference type="EMBL" id="CH473970">
    <property type="protein sequence ID" value="EDM09047.1"/>
    <property type="molecule type" value="Genomic_DNA"/>
</dbReference>
<dbReference type="RefSeq" id="NP_001100791.1">
    <property type="nucleotide sequence ID" value="NM_001107321.3"/>
</dbReference>
<dbReference type="RefSeq" id="XP_017455636.1">
    <property type="nucleotide sequence ID" value="XM_017600147.1"/>
</dbReference>
<dbReference type="SMR" id="D3ZKF5"/>
<dbReference type="FunCoup" id="D3ZKF5">
    <property type="interactions" value="11"/>
</dbReference>
<dbReference type="STRING" id="10116.ENSRNOP00000070978"/>
<dbReference type="PhosphoSitePlus" id="D3ZKF5"/>
<dbReference type="PaxDb" id="10116-ENSRNOP00000022166"/>
<dbReference type="PeptideAtlas" id="D3ZKF5"/>
<dbReference type="Ensembl" id="ENSRNOT00000080084.2">
    <property type="protein sequence ID" value="ENSRNOP00000070978.2"/>
    <property type="gene ID" value="ENSRNOG00000061160.2"/>
</dbReference>
<dbReference type="GeneID" id="306564"/>
<dbReference type="KEGG" id="rno:306564"/>
<dbReference type="UCSC" id="RGD:1306242">
    <property type="organism name" value="rat"/>
</dbReference>
<dbReference type="AGR" id="RGD:1306242"/>
<dbReference type="CTD" id="203100"/>
<dbReference type="RGD" id="1306242">
    <property type="gene designation" value="Htra4"/>
</dbReference>
<dbReference type="eggNOG" id="ENOG502RMZV">
    <property type="taxonomic scope" value="Eukaryota"/>
</dbReference>
<dbReference type="GeneTree" id="ENSGT00940000160760"/>
<dbReference type="InParanoid" id="D3ZKF5"/>
<dbReference type="OMA" id="WIEVVLQ"/>
<dbReference type="OrthoDB" id="4217619at2759"/>
<dbReference type="PhylomeDB" id="D3ZKF5"/>
<dbReference type="TreeFam" id="TF323480"/>
<dbReference type="PRO" id="PR:D3ZKF5"/>
<dbReference type="Proteomes" id="UP000002494">
    <property type="component" value="Chromosome 16"/>
</dbReference>
<dbReference type="Proteomes" id="UP000234681">
    <property type="component" value="Chromosome 16"/>
</dbReference>
<dbReference type="GO" id="GO:0005576">
    <property type="term" value="C:extracellular region"/>
    <property type="evidence" value="ECO:0007669"/>
    <property type="project" value="UniProtKB-SubCell"/>
</dbReference>
<dbReference type="GO" id="GO:0004175">
    <property type="term" value="F:endopeptidase activity"/>
    <property type="evidence" value="ECO:0000266"/>
    <property type="project" value="RGD"/>
</dbReference>
<dbReference type="GO" id="GO:0042802">
    <property type="term" value="F:identical protein binding"/>
    <property type="evidence" value="ECO:0000266"/>
    <property type="project" value="RGD"/>
</dbReference>
<dbReference type="GO" id="GO:0004252">
    <property type="term" value="F:serine-type endopeptidase activity"/>
    <property type="evidence" value="ECO:0000318"/>
    <property type="project" value="GO_Central"/>
</dbReference>
<dbReference type="GO" id="GO:0043065">
    <property type="term" value="P:positive regulation of apoptotic process"/>
    <property type="evidence" value="ECO:0000318"/>
    <property type="project" value="GO_Central"/>
</dbReference>
<dbReference type="GO" id="GO:0012501">
    <property type="term" value="P:programmed cell death"/>
    <property type="evidence" value="ECO:0000318"/>
    <property type="project" value="GO_Central"/>
</dbReference>
<dbReference type="GO" id="GO:0006508">
    <property type="term" value="P:proteolysis"/>
    <property type="evidence" value="ECO:0000266"/>
    <property type="project" value="RGD"/>
</dbReference>
<dbReference type="CDD" id="cd06785">
    <property type="entry name" value="cpPDZ_HtrA-like"/>
    <property type="match status" value="1"/>
</dbReference>
<dbReference type="CDD" id="cd00104">
    <property type="entry name" value="KAZAL_FS"/>
    <property type="match status" value="1"/>
</dbReference>
<dbReference type="FunFam" id="2.40.10.120:FF:000002">
    <property type="entry name" value="HtrA serine peptidase 3"/>
    <property type="match status" value="1"/>
</dbReference>
<dbReference type="Gene3D" id="2.30.42.10">
    <property type="match status" value="1"/>
</dbReference>
<dbReference type="Gene3D" id="2.40.10.120">
    <property type="match status" value="1"/>
</dbReference>
<dbReference type="Gene3D" id="3.30.60.30">
    <property type="match status" value="1"/>
</dbReference>
<dbReference type="Gene3D" id="4.10.40.20">
    <property type="match status" value="1"/>
</dbReference>
<dbReference type="InterPro" id="IPR009030">
    <property type="entry name" value="Growth_fac_rcpt_cys_sf"/>
</dbReference>
<dbReference type="InterPro" id="IPR000867">
    <property type="entry name" value="IGFBP-like"/>
</dbReference>
<dbReference type="InterPro" id="IPR002350">
    <property type="entry name" value="Kazal_dom"/>
</dbReference>
<dbReference type="InterPro" id="IPR036058">
    <property type="entry name" value="Kazal_dom_sf"/>
</dbReference>
<dbReference type="InterPro" id="IPR001478">
    <property type="entry name" value="PDZ"/>
</dbReference>
<dbReference type="InterPro" id="IPR041489">
    <property type="entry name" value="PDZ_6"/>
</dbReference>
<dbReference type="InterPro" id="IPR036034">
    <property type="entry name" value="PDZ_sf"/>
</dbReference>
<dbReference type="InterPro" id="IPR009003">
    <property type="entry name" value="Peptidase_S1_PA"/>
</dbReference>
<dbReference type="InterPro" id="IPR001940">
    <property type="entry name" value="Peptidase_S1C"/>
</dbReference>
<dbReference type="PANTHER" id="PTHR22939">
    <property type="entry name" value="SERINE PROTEASE FAMILY S1C HTRA-RELATED"/>
    <property type="match status" value="1"/>
</dbReference>
<dbReference type="PANTHER" id="PTHR22939:SF105">
    <property type="entry name" value="SERINE PROTEASE HTRA4"/>
    <property type="match status" value="1"/>
</dbReference>
<dbReference type="Pfam" id="PF00219">
    <property type="entry name" value="IGFBP"/>
    <property type="match status" value="1"/>
</dbReference>
<dbReference type="Pfam" id="PF07648">
    <property type="entry name" value="Kazal_2"/>
    <property type="match status" value="1"/>
</dbReference>
<dbReference type="Pfam" id="PF17820">
    <property type="entry name" value="PDZ_6"/>
    <property type="match status" value="1"/>
</dbReference>
<dbReference type="Pfam" id="PF13365">
    <property type="entry name" value="Trypsin_2"/>
    <property type="match status" value="1"/>
</dbReference>
<dbReference type="PRINTS" id="PR00834">
    <property type="entry name" value="PROTEASES2C"/>
</dbReference>
<dbReference type="SMART" id="SM00121">
    <property type="entry name" value="IB"/>
    <property type="match status" value="1"/>
</dbReference>
<dbReference type="SMART" id="SM00280">
    <property type="entry name" value="KAZAL"/>
    <property type="match status" value="1"/>
</dbReference>
<dbReference type="SMART" id="SM00228">
    <property type="entry name" value="PDZ"/>
    <property type="match status" value="1"/>
</dbReference>
<dbReference type="SUPFAM" id="SSF57184">
    <property type="entry name" value="Growth factor receptor domain"/>
    <property type="match status" value="1"/>
</dbReference>
<dbReference type="SUPFAM" id="SSF100895">
    <property type="entry name" value="Kazal-type serine protease inhibitors"/>
    <property type="match status" value="1"/>
</dbReference>
<dbReference type="SUPFAM" id="SSF50156">
    <property type="entry name" value="PDZ domain-like"/>
    <property type="match status" value="1"/>
</dbReference>
<dbReference type="SUPFAM" id="SSF50494">
    <property type="entry name" value="Trypsin-like serine proteases"/>
    <property type="match status" value="1"/>
</dbReference>
<dbReference type="PROSITE" id="PS51323">
    <property type="entry name" value="IGFBP_N_2"/>
    <property type="match status" value="1"/>
</dbReference>
<dbReference type="PROSITE" id="PS50106">
    <property type="entry name" value="PDZ"/>
    <property type="match status" value="1"/>
</dbReference>
<organism>
    <name type="scientific">Rattus norvegicus</name>
    <name type="common">Rat</name>
    <dbReference type="NCBI Taxonomy" id="10116"/>
    <lineage>
        <taxon>Eukaryota</taxon>
        <taxon>Metazoa</taxon>
        <taxon>Chordata</taxon>
        <taxon>Craniata</taxon>
        <taxon>Vertebrata</taxon>
        <taxon>Euteleostomi</taxon>
        <taxon>Mammalia</taxon>
        <taxon>Eutheria</taxon>
        <taxon>Euarchontoglires</taxon>
        <taxon>Glires</taxon>
        <taxon>Rodentia</taxon>
        <taxon>Myomorpha</taxon>
        <taxon>Muroidea</taxon>
        <taxon>Muridae</taxon>
        <taxon>Murinae</taxon>
        <taxon>Rattus</taxon>
    </lineage>
</organism>
<comment type="function">
    <text evidence="1">Serine protease.</text>
</comment>
<comment type="subcellular location">
    <subcellularLocation>
        <location evidence="1">Secreted</location>
    </subcellularLocation>
</comment>
<comment type="similarity">
    <text evidence="5">Belongs to the peptidase S1C family.</text>
</comment>
<name>HTRA4_RAT</name>
<sequence length="488" mass="52193">MSRSKMSSQRLWAVRAQFLLLWLLLWAAPVPWAEARRSRVSLPCPDACDPTRCPPLPSCSAGSALVPDRCGCCQVCAAVEGQECGGARGRPCVPGLRCGAPFSREPSGRAWLGTCGCAEGAEGAAVCGSDGRTYPSLCALRKENRAARQRGALPAVPVQKGACGDSGTTRAGRLRTKYNFIAAVVEKVAPSVVHLQLFRRSPLTNQEIPSSSGSGFIVSEDGLIVTNAHVLTNQQKIQVELQNGAQYEATVKDIDHKLDLALIKIEPDTDLPVLLLGRSSDLRAGEFVVALGSPFSLQNTVTAGIVSTTQRGGKELGLKDSDIDYIQTDAIINHGNSGGPLVNLDGDVIGINTLKVTAGISFAIPSDRIRQFLADYHERQLKGKAPLQKKYLGLRMLPLTLNLLQEMKRQDPDFPDVSSGVFVYEVIQGSAAASSGLRDHDVIVSINGQPVTTTTDVIEAVKDNAFLSIIVLRGSQTLFLTVTPEIIN</sequence>
<feature type="signal peptide" evidence="2">
    <location>
        <begin position="1"/>
        <end position="35"/>
    </location>
</feature>
<feature type="chain" id="PRO_0000417601" description="Serine protease HTR4">
    <location>
        <begin position="36"/>
        <end position="488"/>
    </location>
</feature>
<feature type="domain" description="IGFBP N-terminal" evidence="4">
    <location>
        <begin position="40"/>
        <end position="118"/>
    </location>
</feature>
<feature type="domain" description="PDZ" evidence="3">
    <location>
        <begin position="384"/>
        <end position="476"/>
    </location>
</feature>
<feature type="region of interest" description="Serine protease" evidence="1">
    <location>
        <begin position="213"/>
        <end position="373"/>
    </location>
</feature>
<feature type="active site" description="Charge relay system" evidence="2">
    <location>
        <position position="229"/>
    </location>
</feature>
<feature type="active site" description="Charge relay system" evidence="2">
    <location>
        <position position="259"/>
    </location>
</feature>
<feature type="active site" description="Charge relay system" evidence="2">
    <location>
        <position position="337"/>
    </location>
</feature>
<feature type="disulfide bond" evidence="4">
    <location>
        <begin position="44"/>
        <end position="70"/>
    </location>
</feature>
<feature type="disulfide bond" evidence="4">
    <location>
        <begin position="48"/>
        <end position="72"/>
    </location>
</feature>
<feature type="disulfide bond" evidence="4">
    <location>
        <begin position="53"/>
        <end position="73"/>
    </location>
</feature>
<feature type="disulfide bond" evidence="4">
    <location>
        <begin position="59"/>
        <end position="76"/>
    </location>
</feature>
<feature type="disulfide bond" evidence="4">
    <location>
        <begin position="84"/>
        <end position="98"/>
    </location>
</feature>
<feature type="disulfide bond" evidence="4">
    <location>
        <begin position="92"/>
        <end position="115"/>
    </location>
</feature>
<accession>D3ZKF5</accession>